<gene>
    <name evidence="1" type="primary">menG</name>
    <name type="ordered locus">BCQ_1582</name>
</gene>
<feature type="chain" id="PRO_1000187732" description="Demethylmenaquinone methyltransferase">
    <location>
        <begin position="1"/>
        <end position="237"/>
    </location>
</feature>
<feature type="binding site" evidence="1">
    <location>
        <position position="58"/>
    </location>
    <ligand>
        <name>S-adenosyl-L-methionine</name>
        <dbReference type="ChEBI" id="CHEBI:59789"/>
    </ligand>
</feature>
<feature type="binding site" evidence="1">
    <location>
        <position position="79"/>
    </location>
    <ligand>
        <name>S-adenosyl-L-methionine</name>
        <dbReference type="ChEBI" id="CHEBI:59789"/>
    </ligand>
</feature>
<feature type="binding site" evidence="1">
    <location>
        <begin position="106"/>
        <end position="107"/>
    </location>
    <ligand>
        <name>S-adenosyl-L-methionine</name>
        <dbReference type="ChEBI" id="CHEBI:59789"/>
    </ligand>
</feature>
<evidence type="ECO:0000255" key="1">
    <source>
        <dbReference type="HAMAP-Rule" id="MF_01813"/>
    </source>
</evidence>
<reference key="1">
    <citation type="journal article" date="2009" name="J. Bacteriol.">
        <title>Complete genome sequence of the extremophilic Bacillus cereus strain Q1 with industrial applications.</title>
        <authorList>
            <person name="Xiong Z."/>
            <person name="Jiang Y."/>
            <person name="Qi D."/>
            <person name="Lu H."/>
            <person name="Yang F."/>
            <person name="Yang J."/>
            <person name="Chen L."/>
            <person name="Sun L."/>
            <person name="Xu X."/>
            <person name="Xue Y."/>
            <person name="Zhu Y."/>
            <person name="Jin Q."/>
        </authorList>
    </citation>
    <scope>NUCLEOTIDE SEQUENCE [LARGE SCALE GENOMIC DNA]</scope>
    <source>
        <strain>Q1</strain>
    </source>
</reference>
<protein>
    <recommendedName>
        <fullName evidence="1">Demethylmenaquinone methyltransferase</fullName>
        <ecNumber evidence="1">2.1.1.163</ecNumber>
    </recommendedName>
</protein>
<keyword id="KW-0474">Menaquinone biosynthesis</keyword>
<keyword id="KW-0489">Methyltransferase</keyword>
<keyword id="KW-0949">S-adenosyl-L-methionine</keyword>
<keyword id="KW-0808">Transferase</keyword>
<comment type="function">
    <text evidence="1">Methyltransferase required for the conversion of demethylmenaquinol (DMKH2) to menaquinol (MKH2).</text>
</comment>
<comment type="catalytic activity">
    <reaction evidence="1">
        <text>a 2-demethylmenaquinol + S-adenosyl-L-methionine = a menaquinol + S-adenosyl-L-homocysteine + H(+)</text>
        <dbReference type="Rhea" id="RHEA:42640"/>
        <dbReference type="Rhea" id="RHEA-COMP:9539"/>
        <dbReference type="Rhea" id="RHEA-COMP:9563"/>
        <dbReference type="ChEBI" id="CHEBI:15378"/>
        <dbReference type="ChEBI" id="CHEBI:18151"/>
        <dbReference type="ChEBI" id="CHEBI:55437"/>
        <dbReference type="ChEBI" id="CHEBI:57856"/>
        <dbReference type="ChEBI" id="CHEBI:59789"/>
        <dbReference type="EC" id="2.1.1.163"/>
    </reaction>
</comment>
<comment type="pathway">
    <text evidence="1">Quinol/quinone metabolism; menaquinone biosynthesis; menaquinol from 1,4-dihydroxy-2-naphthoate: step 2/2.</text>
</comment>
<comment type="similarity">
    <text evidence="1">Belongs to the class I-like SAM-binding methyltransferase superfamily. MenG/UbiE family.</text>
</comment>
<accession>B9IVN5</accession>
<proteinExistence type="inferred from homology"/>
<sequence length="237" mass="26887">MQQSKEERVHDVFEKISDKYDVMNSVISFQRHKAWRKETMRIMDVKPGSKALDVCCGTADWTIALAGAVGEQGKVVGLDFSENMLSVGKQKVEALQLKQVELLHGNAMELPFEDNTFDYVTIGFGLRNVPDYMHVLKEMTRVVKPGGKVICLETSQPTMIGFRQGYILYFKYIMPLFGKLFAKSYKEYSWLQESASTFPGMKELANMFEKAGLERVQVKPFTFGVAAMHLGMKPESK</sequence>
<organism>
    <name type="scientific">Bacillus cereus (strain Q1)</name>
    <dbReference type="NCBI Taxonomy" id="361100"/>
    <lineage>
        <taxon>Bacteria</taxon>
        <taxon>Bacillati</taxon>
        <taxon>Bacillota</taxon>
        <taxon>Bacilli</taxon>
        <taxon>Bacillales</taxon>
        <taxon>Bacillaceae</taxon>
        <taxon>Bacillus</taxon>
        <taxon>Bacillus cereus group</taxon>
    </lineage>
</organism>
<name>MENG_BACCQ</name>
<dbReference type="EC" id="2.1.1.163" evidence="1"/>
<dbReference type="EMBL" id="CP000227">
    <property type="protein sequence ID" value="ACM12010.1"/>
    <property type="molecule type" value="Genomic_DNA"/>
</dbReference>
<dbReference type="SMR" id="B9IVN5"/>
<dbReference type="KEGG" id="bcq:BCQ_1582"/>
<dbReference type="HOGENOM" id="CLU_037990_0_0_9"/>
<dbReference type="UniPathway" id="UPA00079">
    <property type="reaction ID" value="UER00169"/>
</dbReference>
<dbReference type="Proteomes" id="UP000000441">
    <property type="component" value="Chromosome"/>
</dbReference>
<dbReference type="GO" id="GO:0043770">
    <property type="term" value="F:demethylmenaquinone methyltransferase activity"/>
    <property type="evidence" value="ECO:0007669"/>
    <property type="project" value="UniProtKB-UniRule"/>
</dbReference>
<dbReference type="GO" id="GO:0009234">
    <property type="term" value="P:menaquinone biosynthetic process"/>
    <property type="evidence" value="ECO:0007669"/>
    <property type="project" value="UniProtKB-UniRule"/>
</dbReference>
<dbReference type="GO" id="GO:0032259">
    <property type="term" value="P:methylation"/>
    <property type="evidence" value="ECO:0007669"/>
    <property type="project" value="UniProtKB-KW"/>
</dbReference>
<dbReference type="CDD" id="cd02440">
    <property type="entry name" value="AdoMet_MTases"/>
    <property type="match status" value="1"/>
</dbReference>
<dbReference type="FunFam" id="3.40.50.150:FF:000086">
    <property type="entry name" value="Demethylmenaquinone methyltransferase"/>
    <property type="match status" value="1"/>
</dbReference>
<dbReference type="Gene3D" id="3.40.50.150">
    <property type="entry name" value="Vaccinia Virus protein VP39"/>
    <property type="match status" value="1"/>
</dbReference>
<dbReference type="HAMAP" id="MF_01813">
    <property type="entry name" value="MenG_UbiE_methyltr"/>
    <property type="match status" value="1"/>
</dbReference>
<dbReference type="InterPro" id="IPR014122">
    <property type="entry name" value="MenG_heptapren"/>
</dbReference>
<dbReference type="InterPro" id="IPR029063">
    <property type="entry name" value="SAM-dependent_MTases_sf"/>
</dbReference>
<dbReference type="InterPro" id="IPR004033">
    <property type="entry name" value="UbiE/COQ5_MeTrFase"/>
</dbReference>
<dbReference type="InterPro" id="IPR023576">
    <property type="entry name" value="UbiE/COQ5_MeTrFase_CS"/>
</dbReference>
<dbReference type="NCBIfam" id="TIGR02752">
    <property type="entry name" value="MenG_heptapren"/>
    <property type="match status" value="1"/>
</dbReference>
<dbReference type="NCBIfam" id="TIGR01934">
    <property type="entry name" value="MenG_MenH_UbiE"/>
    <property type="match status" value="1"/>
</dbReference>
<dbReference type="NCBIfam" id="NF001243">
    <property type="entry name" value="PRK00216.1-4"/>
    <property type="match status" value="1"/>
</dbReference>
<dbReference type="NCBIfam" id="NF001244">
    <property type="entry name" value="PRK00216.1-5"/>
    <property type="match status" value="1"/>
</dbReference>
<dbReference type="PANTHER" id="PTHR43591:SF24">
    <property type="entry name" value="2-METHOXY-6-POLYPRENYL-1,4-BENZOQUINOL METHYLASE, MITOCHONDRIAL"/>
    <property type="match status" value="1"/>
</dbReference>
<dbReference type="PANTHER" id="PTHR43591">
    <property type="entry name" value="METHYLTRANSFERASE"/>
    <property type="match status" value="1"/>
</dbReference>
<dbReference type="Pfam" id="PF01209">
    <property type="entry name" value="Ubie_methyltran"/>
    <property type="match status" value="1"/>
</dbReference>
<dbReference type="SUPFAM" id="SSF53335">
    <property type="entry name" value="S-adenosyl-L-methionine-dependent methyltransferases"/>
    <property type="match status" value="1"/>
</dbReference>
<dbReference type="PROSITE" id="PS51608">
    <property type="entry name" value="SAM_MT_UBIE"/>
    <property type="match status" value="1"/>
</dbReference>
<dbReference type="PROSITE" id="PS01183">
    <property type="entry name" value="UBIE_1"/>
    <property type="match status" value="1"/>
</dbReference>
<dbReference type="PROSITE" id="PS01184">
    <property type="entry name" value="UBIE_2"/>
    <property type="match status" value="1"/>
</dbReference>